<accession>B4TTD2</accession>
<reference key="1">
    <citation type="journal article" date="2011" name="J. Bacteriol.">
        <title>Comparative genomics of 28 Salmonella enterica isolates: evidence for CRISPR-mediated adaptive sublineage evolution.</title>
        <authorList>
            <person name="Fricke W.F."/>
            <person name="Mammel M.K."/>
            <person name="McDermott P.F."/>
            <person name="Tartera C."/>
            <person name="White D.G."/>
            <person name="Leclerc J.E."/>
            <person name="Ravel J."/>
            <person name="Cebula T.A."/>
        </authorList>
    </citation>
    <scope>NUCLEOTIDE SEQUENCE [LARGE SCALE GENOMIC DNA]</scope>
    <source>
        <strain>CVM19633</strain>
    </source>
</reference>
<protein>
    <recommendedName>
        <fullName evidence="1">UPF0502 protein YceH</fullName>
    </recommendedName>
</protein>
<comment type="similarity">
    <text evidence="1">Belongs to the UPF0502 family.</text>
</comment>
<feature type="chain" id="PRO_1000201256" description="UPF0502 protein YceH">
    <location>
        <begin position="1"/>
        <end position="215"/>
    </location>
</feature>
<dbReference type="EMBL" id="CP001127">
    <property type="protein sequence ID" value="ACF91292.1"/>
    <property type="molecule type" value="Genomic_DNA"/>
</dbReference>
<dbReference type="RefSeq" id="WP_000873043.1">
    <property type="nucleotide sequence ID" value="NC_011094.1"/>
</dbReference>
<dbReference type="SMR" id="B4TTD2"/>
<dbReference type="KEGG" id="sew:SeSA_A1236"/>
<dbReference type="HOGENOM" id="CLU_057831_2_0_6"/>
<dbReference type="Proteomes" id="UP000001865">
    <property type="component" value="Chromosome"/>
</dbReference>
<dbReference type="FunFam" id="1.10.10.10:FF:000196">
    <property type="entry name" value="UPF0502 protein YceH"/>
    <property type="match status" value="1"/>
</dbReference>
<dbReference type="Gene3D" id="1.10.10.10">
    <property type="entry name" value="Winged helix-like DNA-binding domain superfamily/Winged helix DNA-binding domain"/>
    <property type="match status" value="2"/>
</dbReference>
<dbReference type="HAMAP" id="MF_01584">
    <property type="entry name" value="UPF0502"/>
    <property type="match status" value="1"/>
</dbReference>
<dbReference type="InterPro" id="IPR007432">
    <property type="entry name" value="DUF480"/>
</dbReference>
<dbReference type="InterPro" id="IPR036388">
    <property type="entry name" value="WH-like_DNA-bd_sf"/>
</dbReference>
<dbReference type="InterPro" id="IPR036390">
    <property type="entry name" value="WH_DNA-bd_sf"/>
</dbReference>
<dbReference type="NCBIfam" id="NF008413">
    <property type="entry name" value="PRK11239.1"/>
    <property type="match status" value="1"/>
</dbReference>
<dbReference type="PANTHER" id="PTHR38768">
    <property type="entry name" value="UPF0502 PROTEIN YCEH"/>
    <property type="match status" value="1"/>
</dbReference>
<dbReference type="PANTHER" id="PTHR38768:SF1">
    <property type="entry name" value="UPF0502 PROTEIN YCEH"/>
    <property type="match status" value="1"/>
</dbReference>
<dbReference type="Pfam" id="PF04337">
    <property type="entry name" value="DUF480"/>
    <property type="match status" value="1"/>
</dbReference>
<dbReference type="SUPFAM" id="SSF46785">
    <property type="entry name" value="Winged helix' DNA-binding domain"/>
    <property type="match status" value="2"/>
</dbReference>
<sequence>MKYELTATEARVIGCLLEKQVTTPEQYPLSVNGVVTACNQKTNREPVMNLTEQEVQEQLDNLVKRHFLRTVSGFGNRVTKYEQRFCNSEFGDLKLSAAEVALVTTLLLRGAQTPGELRSRASRMHEFSDMAEVESTLERLASREDGPYVIRLAREPGKRESRYMHLFCGDVDELSLQTSAPESASGDLQSRVEALESEVAELKQRLDSLLAHLGE</sequence>
<organism>
    <name type="scientific">Salmonella schwarzengrund (strain CVM19633)</name>
    <dbReference type="NCBI Taxonomy" id="439843"/>
    <lineage>
        <taxon>Bacteria</taxon>
        <taxon>Pseudomonadati</taxon>
        <taxon>Pseudomonadota</taxon>
        <taxon>Gammaproteobacteria</taxon>
        <taxon>Enterobacterales</taxon>
        <taxon>Enterobacteriaceae</taxon>
        <taxon>Salmonella</taxon>
    </lineage>
</organism>
<gene>
    <name evidence="1" type="primary">yceH</name>
    <name type="ordered locus">SeSA_A1236</name>
</gene>
<name>YCEH_SALSV</name>
<proteinExistence type="inferred from homology"/>
<evidence type="ECO:0000255" key="1">
    <source>
        <dbReference type="HAMAP-Rule" id="MF_01584"/>
    </source>
</evidence>